<name>RS3_LISMO</name>
<feature type="chain" id="PRO_0000130144" description="Small ribosomal subunit protein uS3">
    <location>
        <begin position="1"/>
        <end position="218"/>
    </location>
</feature>
<feature type="domain" description="KH type-2" evidence="1">
    <location>
        <begin position="38"/>
        <end position="106"/>
    </location>
</feature>
<gene>
    <name evidence="1" type="primary">rpsC</name>
    <name type="ordered locus">lmo2626</name>
</gene>
<proteinExistence type="evidence at protein level"/>
<organism>
    <name type="scientific">Listeria monocytogenes serovar 1/2a (strain ATCC BAA-679 / EGD-e)</name>
    <dbReference type="NCBI Taxonomy" id="169963"/>
    <lineage>
        <taxon>Bacteria</taxon>
        <taxon>Bacillati</taxon>
        <taxon>Bacillota</taxon>
        <taxon>Bacilli</taxon>
        <taxon>Bacillales</taxon>
        <taxon>Listeriaceae</taxon>
        <taxon>Listeria</taxon>
    </lineage>
</organism>
<comment type="function">
    <text evidence="1">Binds the lower part of the 30S subunit head. Binds mRNA in the 70S ribosome, positioning it for translation.</text>
</comment>
<comment type="subunit">
    <text evidence="1">Part of the 30S ribosomal subunit. Forms a tight complex with proteins S10 and S14.</text>
</comment>
<comment type="similarity">
    <text evidence="1">Belongs to the universal ribosomal protein uS3 family.</text>
</comment>
<protein>
    <recommendedName>
        <fullName evidence="1">Small ribosomal subunit protein uS3</fullName>
    </recommendedName>
    <alternativeName>
        <fullName evidence="2">30S ribosomal protein S3</fullName>
    </alternativeName>
</protein>
<evidence type="ECO:0000255" key="1">
    <source>
        <dbReference type="HAMAP-Rule" id="MF_01309"/>
    </source>
</evidence>
<evidence type="ECO:0000305" key="2"/>
<reference key="1">
    <citation type="journal article" date="2001" name="Science">
        <title>Comparative genomics of Listeria species.</title>
        <authorList>
            <person name="Glaser P."/>
            <person name="Frangeul L."/>
            <person name="Buchrieser C."/>
            <person name="Rusniok C."/>
            <person name="Amend A."/>
            <person name="Baquero F."/>
            <person name="Berche P."/>
            <person name="Bloecker H."/>
            <person name="Brandt P."/>
            <person name="Chakraborty T."/>
            <person name="Charbit A."/>
            <person name="Chetouani F."/>
            <person name="Couve E."/>
            <person name="de Daruvar A."/>
            <person name="Dehoux P."/>
            <person name="Domann E."/>
            <person name="Dominguez-Bernal G."/>
            <person name="Duchaud E."/>
            <person name="Durant L."/>
            <person name="Dussurget O."/>
            <person name="Entian K.-D."/>
            <person name="Fsihi H."/>
            <person name="Garcia-del Portillo F."/>
            <person name="Garrido P."/>
            <person name="Gautier L."/>
            <person name="Goebel W."/>
            <person name="Gomez-Lopez N."/>
            <person name="Hain T."/>
            <person name="Hauf J."/>
            <person name="Jackson D."/>
            <person name="Jones L.-M."/>
            <person name="Kaerst U."/>
            <person name="Kreft J."/>
            <person name="Kuhn M."/>
            <person name="Kunst F."/>
            <person name="Kurapkat G."/>
            <person name="Madueno E."/>
            <person name="Maitournam A."/>
            <person name="Mata Vicente J."/>
            <person name="Ng E."/>
            <person name="Nedjari H."/>
            <person name="Nordsiek G."/>
            <person name="Novella S."/>
            <person name="de Pablos B."/>
            <person name="Perez-Diaz J.-C."/>
            <person name="Purcell R."/>
            <person name="Remmel B."/>
            <person name="Rose M."/>
            <person name="Schlueter T."/>
            <person name="Simoes N."/>
            <person name="Tierrez A."/>
            <person name="Vazquez-Boland J.-A."/>
            <person name="Voss H."/>
            <person name="Wehland J."/>
            <person name="Cossart P."/>
        </authorList>
    </citation>
    <scope>NUCLEOTIDE SEQUENCE [LARGE SCALE GENOMIC DNA]</scope>
    <source>
        <strain>ATCC BAA-679 / EGD-e</strain>
    </source>
</reference>
<keyword id="KW-0002">3D-structure</keyword>
<keyword id="KW-1185">Reference proteome</keyword>
<keyword id="KW-0687">Ribonucleoprotein</keyword>
<keyword id="KW-0689">Ribosomal protein</keyword>
<keyword id="KW-0694">RNA-binding</keyword>
<keyword id="KW-0699">rRNA-binding</keyword>
<accession>P66548</accession>
<accession>Q927L3</accession>
<sequence length="218" mass="24542">MGQKVHPIGMRIGVIRDWDSKWYAEKDYADFLHEDLRIRDYVAKRLSDASVSRVEIERAANRVNITIHTAKPGMVIGKGGSEVEALRKNLNELTQKRVHINIVEIKRADLDAKLVAENIARQLEGRVSFRRAQKQAIQRTMRAGAKGIKTQVSGRLGGADIARAEHYSEGTVPLHTLRADIDYAWEEADTTYGKLGVKVWIYRGEVLPTKKNNVEGGK</sequence>
<dbReference type="EMBL" id="AL591983">
    <property type="protein sequence ID" value="CAD00704.1"/>
    <property type="molecule type" value="Genomic_DNA"/>
</dbReference>
<dbReference type="PIR" id="AB1403">
    <property type="entry name" value="AB1403"/>
</dbReference>
<dbReference type="RefSeq" id="NP_466149.1">
    <property type="nucleotide sequence ID" value="NC_003210.1"/>
</dbReference>
<dbReference type="RefSeq" id="WP_003720944.1">
    <property type="nucleotide sequence ID" value="NZ_CP149495.1"/>
</dbReference>
<dbReference type="PDB" id="7NHN">
    <property type="method" value="EM"/>
    <property type="resolution" value="2.90 A"/>
    <property type="chains" value="d=1-218"/>
</dbReference>
<dbReference type="PDBsum" id="7NHN"/>
<dbReference type="EMDB" id="EMD-12334"/>
<dbReference type="SMR" id="P66548"/>
<dbReference type="STRING" id="169963.gene:17595344"/>
<dbReference type="PaxDb" id="169963-lmo2626"/>
<dbReference type="EnsemblBacteria" id="CAD00704">
    <property type="protein sequence ID" value="CAD00704"/>
    <property type="gene ID" value="CAD00704"/>
</dbReference>
<dbReference type="GeneID" id="93240507"/>
<dbReference type="GeneID" id="987185"/>
<dbReference type="KEGG" id="lmo:lmo2626"/>
<dbReference type="PATRIC" id="fig|169963.11.peg.2690"/>
<dbReference type="eggNOG" id="COG0092">
    <property type="taxonomic scope" value="Bacteria"/>
</dbReference>
<dbReference type="HOGENOM" id="CLU_058591_0_2_9"/>
<dbReference type="OrthoDB" id="9806396at2"/>
<dbReference type="PhylomeDB" id="P66548"/>
<dbReference type="BioCyc" id="LMON169963:LMO2626-MONOMER"/>
<dbReference type="Proteomes" id="UP000000817">
    <property type="component" value="Chromosome"/>
</dbReference>
<dbReference type="GO" id="GO:0022627">
    <property type="term" value="C:cytosolic small ribosomal subunit"/>
    <property type="evidence" value="ECO:0000318"/>
    <property type="project" value="GO_Central"/>
</dbReference>
<dbReference type="GO" id="GO:0003729">
    <property type="term" value="F:mRNA binding"/>
    <property type="evidence" value="ECO:0007669"/>
    <property type="project" value="UniProtKB-UniRule"/>
</dbReference>
<dbReference type="GO" id="GO:0019843">
    <property type="term" value="F:rRNA binding"/>
    <property type="evidence" value="ECO:0007669"/>
    <property type="project" value="UniProtKB-UniRule"/>
</dbReference>
<dbReference type="GO" id="GO:0003735">
    <property type="term" value="F:structural constituent of ribosome"/>
    <property type="evidence" value="ECO:0000318"/>
    <property type="project" value="GO_Central"/>
</dbReference>
<dbReference type="GO" id="GO:0006412">
    <property type="term" value="P:translation"/>
    <property type="evidence" value="ECO:0007669"/>
    <property type="project" value="UniProtKB-UniRule"/>
</dbReference>
<dbReference type="CDD" id="cd02412">
    <property type="entry name" value="KH-II_30S_S3"/>
    <property type="match status" value="1"/>
</dbReference>
<dbReference type="FunFam" id="3.30.1140.32:FF:000001">
    <property type="entry name" value="30S ribosomal protein S3"/>
    <property type="match status" value="1"/>
</dbReference>
<dbReference type="FunFam" id="3.30.300.20:FF:000001">
    <property type="entry name" value="30S ribosomal protein S3"/>
    <property type="match status" value="1"/>
</dbReference>
<dbReference type="Gene3D" id="3.30.300.20">
    <property type="match status" value="1"/>
</dbReference>
<dbReference type="Gene3D" id="3.30.1140.32">
    <property type="entry name" value="Ribosomal protein S3, C-terminal domain"/>
    <property type="match status" value="1"/>
</dbReference>
<dbReference type="HAMAP" id="MF_01309_B">
    <property type="entry name" value="Ribosomal_uS3_B"/>
    <property type="match status" value="1"/>
</dbReference>
<dbReference type="InterPro" id="IPR004087">
    <property type="entry name" value="KH_dom"/>
</dbReference>
<dbReference type="InterPro" id="IPR015946">
    <property type="entry name" value="KH_dom-like_a/b"/>
</dbReference>
<dbReference type="InterPro" id="IPR004044">
    <property type="entry name" value="KH_dom_type_2"/>
</dbReference>
<dbReference type="InterPro" id="IPR009019">
    <property type="entry name" value="KH_sf_prok-type"/>
</dbReference>
<dbReference type="InterPro" id="IPR036419">
    <property type="entry name" value="Ribosomal_S3_C_sf"/>
</dbReference>
<dbReference type="InterPro" id="IPR005704">
    <property type="entry name" value="Ribosomal_uS3_bac-typ"/>
</dbReference>
<dbReference type="InterPro" id="IPR001351">
    <property type="entry name" value="Ribosomal_uS3_C"/>
</dbReference>
<dbReference type="InterPro" id="IPR018280">
    <property type="entry name" value="Ribosomal_uS3_CS"/>
</dbReference>
<dbReference type="NCBIfam" id="TIGR01009">
    <property type="entry name" value="rpsC_bact"/>
    <property type="match status" value="1"/>
</dbReference>
<dbReference type="PANTHER" id="PTHR11760">
    <property type="entry name" value="30S/40S RIBOSOMAL PROTEIN S3"/>
    <property type="match status" value="1"/>
</dbReference>
<dbReference type="PANTHER" id="PTHR11760:SF19">
    <property type="entry name" value="SMALL RIBOSOMAL SUBUNIT PROTEIN US3C"/>
    <property type="match status" value="1"/>
</dbReference>
<dbReference type="Pfam" id="PF07650">
    <property type="entry name" value="KH_2"/>
    <property type="match status" value="1"/>
</dbReference>
<dbReference type="Pfam" id="PF00189">
    <property type="entry name" value="Ribosomal_S3_C"/>
    <property type="match status" value="1"/>
</dbReference>
<dbReference type="SMART" id="SM00322">
    <property type="entry name" value="KH"/>
    <property type="match status" value="1"/>
</dbReference>
<dbReference type="SUPFAM" id="SSF54814">
    <property type="entry name" value="Prokaryotic type KH domain (KH-domain type II)"/>
    <property type="match status" value="1"/>
</dbReference>
<dbReference type="SUPFAM" id="SSF54821">
    <property type="entry name" value="Ribosomal protein S3 C-terminal domain"/>
    <property type="match status" value="1"/>
</dbReference>
<dbReference type="PROSITE" id="PS50823">
    <property type="entry name" value="KH_TYPE_2"/>
    <property type="match status" value="1"/>
</dbReference>
<dbReference type="PROSITE" id="PS00548">
    <property type="entry name" value="RIBOSOMAL_S3"/>
    <property type="match status" value="1"/>
</dbReference>